<feature type="signal peptide" evidence="2">
    <location>
        <begin position="1"/>
        <end position="52"/>
    </location>
</feature>
<feature type="chain" id="PRO_0000249296" description="Endoglucanase 19">
    <location>
        <begin position="53"/>
        <end position="523"/>
    </location>
</feature>
<feature type="active site" description="Nucleophile" evidence="5">
    <location>
        <position position="107"/>
    </location>
</feature>
<feature type="active site" evidence="3">
    <location>
        <position position="442"/>
    </location>
</feature>
<feature type="active site" evidence="4">
    <location>
        <position position="493"/>
    </location>
</feature>
<feature type="active site" evidence="4">
    <location>
        <position position="502"/>
    </location>
</feature>
<feature type="glycosylation site" description="N-linked (GlcNAc...) asparagine" evidence="2">
    <location>
        <position position="279"/>
    </location>
</feature>
<name>GUN19_ORYSJ</name>
<gene>
    <name type="ordered locus">Os08g0114200</name>
    <name type="ordered locus">LOC_Os08g02220</name>
    <name type="ORF">P0427G12.14</name>
</gene>
<proteinExistence type="evidence at transcript level"/>
<dbReference type="EC" id="3.2.1.4"/>
<dbReference type="EMBL" id="AP005657">
    <property type="protein sequence ID" value="BAD10555.1"/>
    <property type="molecule type" value="Genomic_DNA"/>
</dbReference>
<dbReference type="EMBL" id="AP008214">
    <property type="protein sequence ID" value="BAF22762.1"/>
    <property type="molecule type" value="Genomic_DNA"/>
</dbReference>
<dbReference type="EMBL" id="AP014964">
    <property type="protein sequence ID" value="BAT03541.1"/>
    <property type="molecule type" value="Genomic_DNA"/>
</dbReference>
<dbReference type="EMBL" id="AK106851">
    <property type="protein sequence ID" value="BAG97853.1"/>
    <property type="molecule type" value="mRNA"/>
</dbReference>
<dbReference type="RefSeq" id="XP_015649019.1">
    <property type="nucleotide sequence ID" value="XM_015793533.1"/>
</dbReference>
<dbReference type="SMR" id="Q6YXT7"/>
<dbReference type="FunCoup" id="Q6YXT7">
    <property type="interactions" value="20"/>
</dbReference>
<dbReference type="STRING" id="39947.Q6YXT7"/>
<dbReference type="CAZy" id="GH9">
    <property type="family name" value="Glycoside Hydrolase Family 9"/>
</dbReference>
<dbReference type="PaxDb" id="39947-Q6YXT7"/>
<dbReference type="EnsemblPlants" id="Os08t0114200-01">
    <property type="protein sequence ID" value="Os08t0114200-01"/>
    <property type="gene ID" value="Os08g0114200"/>
</dbReference>
<dbReference type="Gramene" id="Os08t0114200-01">
    <property type="protein sequence ID" value="Os08t0114200-01"/>
    <property type="gene ID" value="Os08g0114200"/>
</dbReference>
<dbReference type="KEGG" id="dosa:Os08g0114200"/>
<dbReference type="eggNOG" id="ENOG502QPI6">
    <property type="taxonomic scope" value="Eukaryota"/>
</dbReference>
<dbReference type="HOGENOM" id="CLU_008926_1_2_1"/>
<dbReference type="InParanoid" id="Q6YXT7"/>
<dbReference type="OMA" id="WGASWIY"/>
<dbReference type="OrthoDB" id="10257085at2759"/>
<dbReference type="Proteomes" id="UP000000763">
    <property type="component" value="Chromosome 8"/>
</dbReference>
<dbReference type="Proteomes" id="UP000059680">
    <property type="component" value="Chromosome 8"/>
</dbReference>
<dbReference type="GO" id="GO:0005576">
    <property type="term" value="C:extracellular region"/>
    <property type="evidence" value="ECO:0007669"/>
    <property type="project" value="UniProtKB-SubCell"/>
</dbReference>
<dbReference type="GO" id="GO:0008810">
    <property type="term" value="F:cellulase activity"/>
    <property type="evidence" value="ECO:0007669"/>
    <property type="project" value="UniProtKB-EC"/>
</dbReference>
<dbReference type="GO" id="GO:0071555">
    <property type="term" value="P:cell wall organization"/>
    <property type="evidence" value="ECO:0007669"/>
    <property type="project" value="UniProtKB-KW"/>
</dbReference>
<dbReference type="GO" id="GO:0030245">
    <property type="term" value="P:cellulose catabolic process"/>
    <property type="evidence" value="ECO:0007669"/>
    <property type="project" value="UniProtKB-KW"/>
</dbReference>
<dbReference type="FunFam" id="1.50.10.10:FF:000020">
    <property type="entry name" value="Endoglucanase"/>
    <property type="match status" value="1"/>
</dbReference>
<dbReference type="Gene3D" id="1.50.10.10">
    <property type="match status" value="1"/>
</dbReference>
<dbReference type="InterPro" id="IPR008928">
    <property type="entry name" value="6-hairpin_glycosidase_sf"/>
</dbReference>
<dbReference type="InterPro" id="IPR012341">
    <property type="entry name" value="6hp_glycosidase-like_sf"/>
</dbReference>
<dbReference type="InterPro" id="IPR001701">
    <property type="entry name" value="Glyco_hydro_9"/>
</dbReference>
<dbReference type="InterPro" id="IPR033126">
    <property type="entry name" value="Glyco_hydro_9_Asp/Glu_AS"/>
</dbReference>
<dbReference type="InterPro" id="IPR018221">
    <property type="entry name" value="Glyco_hydro_9_His_AS"/>
</dbReference>
<dbReference type="PANTHER" id="PTHR22298">
    <property type="entry name" value="ENDO-1,4-BETA-GLUCANASE"/>
    <property type="match status" value="1"/>
</dbReference>
<dbReference type="Pfam" id="PF00759">
    <property type="entry name" value="Glyco_hydro_9"/>
    <property type="match status" value="1"/>
</dbReference>
<dbReference type="SUPFAM" id="SSF48208">
    <property type="entry name" value="Six-hairpin glycosidases"/>
    <property type="match status" value="1"/>
</dbReference>
<dbReference type="PROSITE" id="PS60032">
    <property type="entry name" value="GH9_1"/>
    <property type="match status" value="1"/>
</dbReference>
<dbReference type="PROSITE" id="PS00592">
    <property type="entry name" value="GH9_2"/>
    <property type="match status" value="1"/>
</dbReference>
<dbReference type="PROSITE" id="PS00698">
    <property type="entry name" value="GH9_3"/>
    <property type="match status" value="1"/>
</dbReference>
<evidence type="ECO:0000250" key="1"/>
<evidence type="ECO:0000255" key="2"/>
<evidence type="ECO:0000255" key="3">
    <source>
        <dbReference type="PROSITE-ProRule" id="PRU10059"/>
    </source>
</evidence>
<evidence type="ECO:0000255" key="4">
    <source>
        <dbReference type="PROSITE-ProRule" id="PRU10060"/>
    </source>
</evidence>
<evidence type="ECO:0000255" key="5">
    <source>
        <dbReference type="PROSITE-ProRule" id="PRU10140"/>
    </source>
</evidence>
<evidence type="ECO:0000305" key="6"/>
<accession>Q6YXT7</accession>
<accession>A0A0P0XB73</accession>
<accession>Q0J8F3</accession>
<keyword id="KW-0119">Carbohydrate metabolism</keyword>
<keyword id="KW-0961">Cell wall biogenesis/degradation</keyword>
<keyword id="KW-0136">Cellulose degradation</keyword>
<keyword id="KW-0325">Glycoprotein</keyword>
<keyword id="KW-0326">Glycosidase</keyword>
<keyword id="KW-0378">Hydrolase</keyword>
<keyword id="KW-0624">Polysaccharide degradation</keyword>
<keyword id="KW-1185">Reference proteome</keyword>
<keyword id="KW-0964">Secreted</keyword>
<keyword id="KW-0732">Signal</keyword>
<protein>
    <recommendedName>
        <fullName>Endoglucanase 19</fullName>
        <ecNumber>3.2.1.4</ecNumber>
    </recommendedName>
    <alternativeName>
        <fullName>Endo-1,4-beta glucanase 19</fullName>
    </alternativeName>
</protein>
<comment type="catalytic activity">
    <reaction>
        <text>Endohydrolysis of (1-&gt;4)-beta-D-glucosidic linkages in cellulose, lichenin and cereal beta-D-glucans.</text>
        <dbReference type="EC" id="3.2.1.4"/>
    </reaction>
</comment>
<comment type="subcellular location">
    <subcellularLocation>
        <location evidence="1">Secreted</location>
    </subcellularLocation>
</comment>
<comment type="similarity">
    <text evidence="5 6">Belongs to the glycosyl hydrolase 9 (cellulase E) family.</text>
</comment>
<organism>
    <name type="scientific">Oryza sativa subsp. japonica</name>
    <name type="common">Rice</name>
    <dbReference type="NCBI Taxonomy" id="39947"/>
    <lineage>
        <taxon>Eukaryota</taxon>
        <taxon>Viridiplantae</taxon>
        <taxon>Streptophyta</taxon>
        <taxon>Embryophyta</taxon>
        <taxon>Tracheophyta</taxon>
        <taxon>Spermatophyta</taxon>
        <taxon>Magnoliopsida</taxon>
        <taxon>Liliopsida</taxon>
        <taxon>Poales</taxon>
        <taxon>Poaceae</taxon>
        <taxon>BOP clade</taxon>
        <taxon>Oryzoideae</taxon>
        <taxon>Oryzeae</taxon>
        <taxon>Oryzinae</taxon>
        <taxon>Oryza</taxon>
        <taxon>Oryza sativa</taxon>
    </lineage>
</organism>
<sequence>MCSWSLSSHTLTSPVRQAAMEPKSSSCGGAGIRLRLLVVLHLLLLVPSSAMAFNYADALAKSIIFFEGQRSGKLPPGNRMPWRADSGLTDGAQYNVDLVGGYYDAGDNVKFGLPMAFSTTMLAWSVLDFGKFMGAELPNARAAVRWGADYLLKAATATPGALYVQVADPNQDHRCWERPEDMDTPRSVYRVTADKPGSDVAGETAAALAASSMVFRRADPAYSARLLHAATQVFDFADRHRGSYSDSLASSVCPFYCSYSGYHDELLWGASWLHRASRNASFMSYVEANGMQLGAGDDDYSFSWDDKRVGTKVLLAKGFLRNRLHGLELYKAHSDSYICSLVPGTASFQSRYTPGGLLYREGSSNMQYVTTATFLMLAYAKYLRSSGATASCGDGGGGARGEVSAAELVAVAKRQVDYILGKNPAGMSYMVGFGCRYPRRAHHRGASMPSVRAHPGRISCDAGFGYLHSGEPNPNVLVGAVVGGPDSRDAFADDRGNFAQSEPATYINAPLVGALAYFAGTTK</sequence>
<reference key="1">
    <citation type="journal article" date="2005" name="Nature">
        <title>The map-based sequence of the rice genome.</title>
        <authorList>
            <consortium name="International rice genome sequencing project (IRGSP)"/>
        </authorList>
    </citation>
    <scope>NUCLEOTIDE SEQUENCE [LARGE SCALE GENOMIC DNA]</scope>
    <source>
        <strain>cv. Nipponbare</strain>
    </source>
</reference>
<reference key="2">
    <citation type="journal article" date="2008" name="Nucleic Acids Res.">
        <title>The rice annotation project database (RAP-DB): 2008 update.</title>
        <authorList>
            <consortium name="The rice annotation project (RAP)"/>
        </authorList>
    </citation>
    <scope>GENOME REANNOTATION</scope>
    <source>
        <strain>cv. Nipponbare</strain>
    </source>
</reference>
<reference key="3">
    <citation type="journal article" date="2013" name="Rice">
        <title>Improvement of the Oryza sativa Nipponbare reference genome using next generation sequence and optical map data.</title>
        <authorList>
            <person name="Kawahara Y."/>
            <person name="de la Bastide M."/>
            <person name="Hamilton J.P."/>
            <person name="Kanamori H."/>
            <person name="McCombie W.R."/>
            <person name="Ouyang S."/>
            <person name="Schwartz D.C."/>
            <person name="Tanaka T."/>
            <person name="Wu J."/>
            <person name="Zhou S."/>
            <person name="Childs K.L."/>
            <person name="Davidson R.M."/>
            <person name="Lin H."/>
            <person name="Quesada-Ocampo L."/>
            <person name="Vaillancourt B."/>
            <person name="Sakai H."/>
            <person name="Lee S.S."/>
            <person name="Kim J."/>
            <person name="Numa H."/>
            <person name="Itoh T."/>
            <person name="Buell C.R."/>
            <person name="Matsumoto T."/>
        </authorList>
    </citation>
    <scope>GENOME REANNOTATION</scope>
    <source>
        <strain>cv. Nipponbare</strain>
    </source>
</reference>
<reference key="4">
    <citation type="journal article" date="2003" name="Science">
        <title>Collection, mapping, and annotation of over 28,000 cDNA clones from japonica rice.</title>
        <authorList>
            <consortium name="The rice full-length cDNA consortium"/>
        </authorList>
    </citation>
    <scope>NUCLEOTIDE SEQUENCE [LARGE SCALE MRNA]</scope>
    <source>
        <strain>cv. Nipponbare</strain>
    </source>
</reference>